<reference key="1">
    <citation type="journal article" date="2004" name="J. Bacteriol.">
        <title>Complete genome sequence of Rickettsia typhi and comparison with sequences of other Rickettsiae.</title>
        <authorList>
            <person name="McLeod M.P."/>
            <person name="Qin X."/>
            <person name="Karpathy S.E."/>
            <person name="Gioia J."/>
            <person name="Highlander S.K."/>
            <person name="Fox G.E."/>
            <person name="McNeill T.Z."/>
            <person name="Jiang H."/>
            <person name="Muzny D."/>
            <person name="Jacob L.S."/>
            <person name="Hawes A.C."/>
            <person name="Sodergren E."/>
            <person name="Gill R."/>
            <person name="Hume J."/>
            <person name="Morgan M."/>
            <person name="Fan G."/>
            <person name="Amin A.G."/>
            <person name="Gibbs R.A."/>
            <person name="Hong C."/>
            <person name="Yu X.-J."/>
            <person name="Walker D.H."/>
            <person name="Weinstock G.M."/>
        </authorList>
    </citation>
    <scope>NUCLEOTIDE SEQUENCE [LARGE SCALE GENOMIC DNA]</scope>
    <source>
        <strain>ATCC VR-144 / Wilmington</strain>
    </source>
</reference>
<protein>
    <recommendedName>
        <fullName evidence="1">Endolytic peptidoglycan transglycosylase RlpA</fullName>
        <ecNumber evidence="1">4.2.2.-</ecNumber>
    </recommendedName>
</protein>
<evidence type="ECO:0000255" key="1">
    <source>
        <dbReference type="HAMAP-Rule" id="MF_02071"/>
    </source>
</evidence>
<dbReference type="EC" id="4.2.2.-" evidence="1"/>
<dbReference type="EMBL" id="AE017197">
    <property type="protein sequence ID" value="AAU03855.1"/>
    <property type="molecule type" value="Genomic_DNA"/>
</dbReference>
<dbReference type="RefSeq" id="WP_011190839.1">
    <property type="nucleotide sequence ID" value="NC_006142.1"/>
</dbReference>
<dbReference type="SMR" id="Q68WY7"/>
<dbReference type="KEGG" id="rty:RT0378"/>
<dbReference type="eggNOG" id="COG0797">
    <property type="taxonomic scope" value="Bacteria"/>
</dbReference>
<dbReference type="HOGENOM" id="CLU_042923_6_1_5"/>
<dbReference type="OrthoDB" id="9779128at2"/>
<dbReference type="Proteomes" id="UP000000604">
    <property type="component" value="Chromosome"/>
</dbReference>
<dbReference type="GO" id="GO:0008932">
    <property type="term" value="F:lytic endotransglycosylase activity"/>
    <property type="evidence" value="ECO:0007669"/>
    <property type="project" value="UniProtKB-UniRule"/>
</dbReference>
<dbReference type="GO" id="GO:0071555">
    <property type="term" value="P:cell wall organization"/>
    <property type="evidence" value="ECO:0007669"/>
    <property type="project" value="UniProtKB-KW"/>
</dbReference>
<dbReference type="GO" id="GO:0000270">
    <property type="term" value="P:peptidoglycan metabolic process"/>
    <property type="evidence" value="ECO:0007669"/>
    <property type="project" value="UniProtKB-UniRule"/>
</dbReference>
<dbReference type="CDD" id="cd22268">
    <property type="entry name" value="DPBB_RlpA-like"/>
    <property type="match status" value="1"/>
</dbReference>
<dbReference type="Gene3D" id="2.40.40.10">
    <property type="entry name" value="RlpA-like domain"/>
    <property type="match status" value="1"/>
</dbReference>
<dbReference type="HAMAP" id="MF_02071">
    <property type="entry name" value="RlpA"/>
    <property type="match status" value="1"/>
</dbReference>
<dbReference type="InterPro" id="IPR034718">
    <property type="entry name" value="RlpA"/>
</dbReference>
<dbReference type="InterPro" id="IPR009009">
    <property type="entry name" value="RlpA-like_DPBB"/>
</dbReference>
<dbReference type="InterPro" id="IPR036908">
    <property type="entry name" value="RlpA-like_sf"/>
</dbReference>
<dbReference type="InterPro" id="IPR022438">
    <property type="entry name" value="RPE5"/>
</dbReference>
<dbReference type="InterPro" id="IPR012997">
    <property type="entry name" value="RplA"/>
</dbReference>
<dbReference type="NCBIfam" id="TIGR00413">
    <property type="entry name" value="rlpA"/>
    <property type="match status" value="1"/>
</dbReference>
<dbReference type="NCBIfam" id="TIGR03776">
    <property type="entry name" value="RPE5"/>
    <property type="match status" value="1"/>
</dbReference>
<dbReference type="PANTHER" id="PTHR34183">
    <property type="entry name" value="ENDOLYTIC PEPTIDOGLYCAN TRANSGLYCOSYLASE RLPA"/>
    <property type="match status" value="1"/>
</dbReference>
<dbReference type="PANTHER" id="PTHR34183:SF1">
    <property type="entry name" value="ENDOLYTIC PEPTIDOGLYCAN TRANSGLYCOSYLASE RLPA"/>
    <property type="match status" value="1"/>
</dbReference>
<dbReference type="Pfam" id="PF03330">
    <property type="entry name" value="DPBB_1"/>
    <property type="match status" value="1"/>
</dbReference>
<dbReference type="SUPFAM" id="SSF50685">
    <property type="entry name" value="Barwin-like endoglucanases"/>
    <property type="match status" value="1"/>
</dbReference>
<accession>Q68WY7</accession>
<sequence length="320" mass="37374">MIIMRNYKFKLESLHQNQKVFRRCTVHSTVLHIISLHEDWSTRLTYKLSLYYCKIKNCYTTFKFEKSNRSIITRAERIINVQHLRRCKDIVDNFSGLISILLVLIFCINLSGCNTSKRLAYDNKYSYKELSKDDPHNLTYIGHYKVGKNYKIKGKIYKPYTPKYFTETGYASWYGGRKDGFHGKKTANGDRFNRNLLTAAHKTLPLPCLVKVTNKANNKSVILMVNDRGPFKKNRIIDVSQKAAEILAFKNQGITKVRIEYLPNETEKFLKKINLKKTENKIFANNYKESLFTKVTKNNQCSINCHIKLVNLKYKLAVNP</sequence>
<gene>
    <name evidence="1" type="primary">rlpA</name>
    <name type="ordered locus">RT0378</name>
</gene>
<organism>
    <name type="scientific">Rickettsia typhi (strain ATCC VR-144 / Wilmington)</name>
    <dbReference type="NCBI Taxonomy" id="257363"/>
    <lineage>
        <taxon>Bacteria</taxon>
        <taxon>Pseudomonadati</taxon>
        <taxon>Pseudomonadota</taxon>
        <taxon>Alphaproteobacteria</taxon>
        <taxon>Rickettsiales</taxon>
        <taxon>Rickettsiaceae</taxon>
        <taxon>Rickettsieae</taxon>
        <taxon>Rickettsia</taxon>
        <taxon>typhus group</taxon>
    </lineage>
</organism>
<proteinExistence type="inferred from homology"/>
<keyword id="KW-0961">Cell wall biogenesis/degradation</keyword>
<keyword id="KW-0456">Lyase</keyword>
<comment type="function">
    <text evidence="1">Lytic transglycosylase with a strong preference for naked glycan strands that lack stem peptides.</text>
</comment>
<comment type="similarity">
    <text evidence="1">Belongs to the RlpA family.</text>
</comment>
<feature type="chain" id="PRO_0000280828" description="Endolytic peptidoglycan transglycosylase RlpA">
    <location>
        <begin position="1"/>
        <end position="320"/>
    </location>
</feature>
<name>RLPA_RICTY</name>